<comment type="function">
    <text evidence="1">Represses a number of genes involved in the response to DNA damage (SOS response), including recA and lexA. Binds to the 16 bp palindromic sequence 5'-CTGTATATATATACAG-3'. In the presence of single-stranded DNA, RecA interacts with LexA causing an autocatalytic cleavage which disrupts the DNA-binding part of LexA, leading to derepression of the SOS regulon and eventually DNA repair.</text>
</comment>
<comment type="catalytic activity">
    <reaction evidence="1">
        <text>Hydrolysis of Ala-|-Gly bond in repressor LexA.</text>
        <dbReference type="EC" id="3.4.21.88"/>
    </reaction>
</comment>
<comment type="subunit">
    <text evidence="1">Homodimer.</text>
</comment>
<comment type="similarity">
    <text evidence="1">Belongs to the peptidase S24 family.</text>
</comment>
<protein>
    <recommendedName>
        <fullName evidence="1">LexA repressor</fullName>
        <ecNumber evidence="1">3.4.21.88</ecNumber>
    </recommendedName>
</protein>
<organism>
    <name type="scientific">Shigella boydii serotype 4 (strain Sb227)</name>
    <dbReference type="NCBI Taxonomy" id="300268"/>
    <lineage>
        <taxon>Bacteria</taxon>
        <taxon>Pseudomonadati</taxon>
        <taxon>Pseudomonadota</taxon>
        <taxon>Gammaproteobacteria</taxon>
        <taxon>Enterobacterales</taxon>
        <taxon>Enterobacteriaceae</taxon>
        <taxon>Shigella</taxon>
    </lineage>
</organism>
<proteinExistence type="inferred from homology"/>
<name>LEXA_SHIBS</name>
<accession>Q31TV1</accession>
<sequence>MKALTARQQEVFDLIRDHISQTGMPPTRAEIAQRLGFRSPNAAEEHLKALARKGVIEIVSGASRGIRLLQEEEEGLPLVGRVAAGEPLLAQQHIEGHYQVDPSLFKPNADFLLRVSGMSMKDIGIMDGDLLAVHKTQDVRNGQVVVARIDDEVTVKRLKKQGNKVELLPENSEFKPIVVDLRQQSFTIEGLAVGVIRNGDWL</sequence>
<reference key="1">
    <citation type="journal article" date="2005" name="Nucleic Acids Res.">
        <title>Genome dynamics and diversity of Shigella species, the etiologic agents of bacillary dysentery.</title>
        <authorList>
            <person name="Yang F."/>
            <person name="Yang J."/>
            <person name="Zhang X."/>
            <person name="Chen L."/>
            <person name="Jiang Y."/>
            <person name="Yan Y."/>
            <person name="Tang X."/>
            <person name="Wang J."/>
            <person name="Xiong Z."/>
            <person name="Dong J."/>
            <person name="Xue Y."/>
            <person name="Zhu Y."/>
            <person name="Xu X."/>
            <person name="Sun L."/>
            <person name="Chen S."/>
            <person name="Nie H."/>
            <person name="Peng J."/>
            <person name="Xu J."/>
            <person name="Wang Y."/>
            <person name="Yuan Z."/>
            <person name="Wen Y."/>
            <person name="Yao Z."/>
            <person name="Shen Y."/>
            <person name="Qiang B."/>
            <person name="Hou Y."/>
            <person name="Yu J."/>
            <person name="Jin Q."/>
        </authorList>
    </citation>
    <scope>NUCLEOTIDE SEQUENCE [LARGE SCALE GENOMIC DNA]</scope>
    <source>
        <strain>Sb227</strain>
    </source>
</reference>
<feature type="chain" id="PRO_1000001343" description="LexA repressor">
    <location>
        <begin position="1"/>
        <end position="202"/>
    </location>
</feature>
<feature type="DNA-binding region" description="H-T-H motif" evidence="1">
    <location>
        <begin position="28"/>
        <end position="48"/>
    </location>
</feature>
<feature type="active site" description="For autocatalytic cleavage activity" evidence="1">
    <location>
        <position position="119"/>
    </location>
</feature>
<feature type="active site" description="For autocatalytic cleavage activity" evidence="1">
    <location>
        <position position="156"/>
    </location>
</feature>
<feature type="site" description="Cleavage; by autolysis" evidence="1">
    <location>
        <begin position="84"/>
        <end position="85"/>
    </location>
</feature>
<gene>
    <name evidence="1" type="primary">lexA</name>
    <name type="ordered locus">SBO_4074</name>
</gene>
<evidence type="ECO:0000255" key="1">
    <source>
        <dbReference type="HAMAP-Rule" id="MF_00015"/>
    </source>
</evidence>
<dbReference type="EC" id="3.4.21.88" evidence="1"/>
<dbReference type="EMBL" id="CP000036">
    <property type="protein sequence ID" value="ABB68507.1"/>
    <property type="molecule type" value="Genomic_DNA"/>
</dbReference>
<dbReference type="RefSeq" id="WP_000646078.1">
    <property type="nucleotide sequence ID" value="NC_007613.1"/>
</dbReference>
<dbReference type="SMR" id="Q31TV1"/>
<dbReference type="MEROPS" id="S24.001"/>
<dbReference type="GeneID" id="93777788"/>
<dbReference type="KEGG" id="sbo:SBO_4074"/>
<dbReference type="HOGENOM" id="CLU_066192_45_3_6"/>
<dbReference type="Proteomes" id="UP000007067">
    <property type="component" value="Chromosome"/>
</dbReference>
<dbReference type="GO" id="GO:0003677">
    <property type="term" value="F:DNA binding"/>
    <property type="evidence" value="ECO:0007669"/>
    <property type="project" value="UniProtKB-UniRule"/>
</dbReference>
<dbReference type="GO" id="GO:0004252">
    <property type="term" value="F:serine-type endopeptidase activity"/>
    <property type="evidence" value="ECO:0007669"/>
    <property type="project" value="UniProtKB-UniRule"/>
</dbReference>
<dbReference type="GO" id="GO:0006281">
    <property type="term" value="P:DNA repair"/>
    <property type="evidence" value="ECO:0007669"/>
    <property type="project" value="UniProtKB-UniRule"/>
</dbReference>
<dbReference type="GO" id="GO:0006260">
    <property type="term" value="P:DNA replication"/>
    <property type="evidence" value="ECO:0007669"/>
    <property type="project" value="UniProtKB-UniRule"/>
</dbReference>
<dbReference type="GO" id="GO:0045892">
    <property type="term" value="P:negative regulation of DNA-templated transcription"/>
    <property type="evidence" value="ECO:0007669"/>
    <property type="project" value="UniProtKB-UniRule"/>
</dbReference>
<dbReference type="GO" id="GO:0006508">
    <property type="term" value="P:proteolysis"/>
    <property type="evidence" value="ECO:0007669"/>
    <property type="project" value="InterPro"/>
</dbReference>
<dbReference type="GO" id="GO:0009432">
    <property type="term" value="P:SOS response"/>
    <property type="evidence" value="ECO:0007669"/>
    <property type="project" value="UniProtKB-UniRule"/>
</dbReference>
<dbReference type="CDD" id="cd06529">
    <property type="entry name" value="S24_LexA-like"/>
    <property type="match status" value="1"/>
</dbReference>
<dbReference type="FunFam" id="1.10.10.10:FF:000009">
    <property type="entry name" value="LexA repressor"/>
    <property type="match status" value="1"/>
</dbReference>
<dbReference type="FunFam" id="2.10.109.10:FF:000001">
    <property type="entry name" value="LexA repressor"/>
    <property type="match status" value="1"/>
</dbReference>
<dbReference type="Gene3D" id="2.10.109.10">
    <property type="entry name" value="Umud Fragment, subunit A"/>
    <property type="match status" value="1"/>
</dbReference>
<dbReference type="Gene3D" id="1.10.10.10">
    <property type="entry name" value="Winged helix-like DNA-binding domain superfamily/Winged helix DNA-binding domain"/>
    <property type="match status" value="1"/>
</dbReference>
<dbReference type="HAMAP" id="MF_00015">
    <property type="entry name" value="LexA"/>
    <property type="match status" value="1"/>
</dbReference>
<dbReference type="InterPro" id="IPR006200">
    <property type="entry name" value="LexA"/>
</dbReference>
<dbReference type="InterPro" id="IPR039418">
    <property type="entry name" value="LexA-like"/>
</dbReference>
<dbReference type="InterPro" id="IPR036286">
    <property type="entry name" value="LexA/Signal_pep-like_sf"/>
</dbReference>
<dbReference type="InterPro" id="IPR006199">
    <property type="entry name" value="LexA_DNA-bd_dom"/>
</dbReference>
<dbReference type="InterPro" id="IPR050077">
    <property type="entry name" value="LexA_repressor"/>
</dbReference>
<dbReference type="InterPro" id="IPR006197">
    <property type="entry name" value="Peptidase_S24_LexA"/>
</dbReference>
<dbReference type="InterPro" id="IPR015927">
    <property type="entry name" value="Peptidase_S24_S26A/B/C"/>
</dbReference>
<dbReference type="InterPro" id="IPR036388">
    <property type="entry name" value="WH-like_DNA-bd_sf"/>
</dbReference>
<dbReference type="InterPro" id="IPR036390">
    <property type="entry name" value="WH_DNA-bd_sf"/>
</dbReference>
<dbReference type="NCBIfam" id="TIGR00498">
    <property type="entry name" value="lexA"/>
    <property type="match status" value="1"/>
</dbReference>
<dbReference type="PANTHER" id="PTHR33516">
    <property type="entry name" value="LEXA REPRESSOR"/>
    <property type="match status" value="1"/>
</dbReference>
<dbReference type="PANTHER" id="PTHR33516:SF2">
    <property type="entry name" value="LEXA REPRESSOR-RELATED"/>
    <property type="match status" value="1"/>
</dbReference>
<dbReference type="Pfam" id="PF01726">
    <property type="entry name" value="LexA_DNA_bind"/>
    <property type="match status" value="1"/>
</dbReference>
<dbReference type="Pfam" id="PF00717">
    <property type="entry name" value="Peptidase_S24"/>
    <property type="match status" value="1"/>
</dbReference>
<dbReference type="PRINTS" id="PR00726">
    <property type="entry name" value="LEXASERPTASE"/>
</dbReference>
<dbReference type="SUPFAM" id="SSF51306">
    <property type="entry name" value="LexA/Signal peptidase"/>
    <property type="match status" value="1"/>
</dbReference>
<dbReference type="SUPFAM" id="SSF46785">
    <property type="entry name" value="Winged helix' DNA-binding domain"/>
    <property type="match status" value="1"/>
</dbReference>
<keyword id="KW-0068">Autocatalytic cleavage</keyword>
<keyword id="KW-0227">DNA damage</keyword>
<keyword id="KW-0234">DNA repair</keyword>
<keyword id="KW-0235">DNA replication</keyword>
<keyword id="KW-0238">DNA-binding</keyword>
<keyword id="KW-0378">Hydrolase</keyword>
<keyword id="KW-0678">Repressor</keyword>
<keyword id="KW-0742">SOS response</keyword>
<keyword id="KW-0804">Transcription</keyword>
<keyword id="KW-0805">Transcription regulation</keyword>